<dbReference type="EC" id="3.5.4.13" evidence="1"/>
<dbReference type="EMBL" id="CP000235">
    <property type="protein sequence ID" value="ABD43468.1"/>
    <property type="molecule type" value="Genomic_DNA"/>
</dbReference>
<dbReference type="RefSeq" id="WP_011450283.1">
    <property type="nucleotide sequence ID" value="NC_007797.1"/>
</dbReference>
<dbReference type="PDB" id="3KM3">
    <property type="method" value="X-ray"/>
    <property type="resolution" value="2.10 A"/>
    <property type="chains" value="A/B=1-185"/>
</dbReference>
<dbReference type="PDBsum" id="3KM3"/>
<dbReference type="SMR" id="Q2GLJ4"/>
<dbReference type="STRING" id="212042.APH_0130"/>
<dbReference type="PaxDb" id="212042-APH_0130"/>
<dbReference type="EnsemblBacteria" id="ABD43468">
    <property type="protein sequence ID" value="ABD43468"/>
    <property type="gene ID" value="APH_0130"/>
</dbReference>
<dbReference type="GeneID" id="92747634"/>
<dbReference type="KEGG" id="aph:APH_0130"/>
<dbReference type="eggNOG" id="COG0717">
    <property type="taxonomic scope" value="Bacteria"/>
</dbReference>
<dbReference type="HOGENOM" id="CLU_087476_4_0_5"/>
<dbReference type="UniPathway" id="UPA00610">
    <property type="reaction ID" value="UER00665"/>
</dbReference>
<dbReference type="EvolutionaryTrace" id="Q2GLJ4"/>
<dbReference type="Proteomes" id="UP000001943">
    <property type="component" value="Chromosome"/>
</dbReference>
<dbReference type="GO" id="GO:0008829">
    <property type="term" value="F:dCTP deaminase activity"/>
    <property type="evidence" value="ECO:0007669"/>
    <property type="project" value="UniProtKB-UniRule"/>
</dbReference>
<dbReference type="GO" id="GO:0000166">
    <property type="term" value="F:nucleotide binding"/>
    <property type="evidence" value="ECO:0007669"/>
    <property type="project" value="UniProtKB-KW"/>
</dbReference>
<dbReference type="GO" id="GO:0006226">
    <property type="term" value="P:dUMP biosynthetic process"/>
    <property type="evidence" value="ECO:0007669"/>
    <property type="project" value="UniProtKB-UniPathway"/>
</dbReference>
<dbReference type="GO" id="GO:0006229">
    <property type="term" value="P:dUTP biosynthetic process"/>
    <property type="evidence" value="ECO:0007669"/>
    <property type="project" value="UniProtKB-UniRule"/>
</dbReference>
<dbReference type="CDD" id="cd07557">
    <property type="entry name" value="trimeric_dUTPase"/>
    <property type="match status" value="1"/>
</dbReference>
<dbReference type="FunFam" id="2.70.40.10:FF:000001">
    <property type="entry name" value="dCTP deaminase"/>
    <property type="match status" value="1"/>
</dbReference>
<dbReference type="Gene3D" id="2.70.40.10">
    <property type="match status" value="1"/>
</dbReference>
<dbReference type="HAMAP" id="MF_00146">
    <property type="entry name" value="dCTP_deaminase"/>
    <property type="match status" value="1"/>
</dbReference>
<dbReference type="InterPro" id="IPR011962">
    <property type="entry name" value="dCTP_deaminase"/>
</dbReference>
<dbReference type="InterPro" id="IPR036157">
    <property type="entry name" value="dUTPase-like_sf"/>
</dbReference>
<dbReference type="InterPro" id="IPR033704">
    <property type="entry name" value="dUTPase_trimeric"/>
</dbReference>
<dbReference type="NCBIfam" id="TIGR02274">
    <property type="entry name" value="dCTP_deam"/>
    <property type="match status" value="1"/>
</dbReference>
<dbReference type="PANTHER" id="PTHR42680">
    <property type="entry name" value="DCTP DEAMINASE"/>
    <property type="match status" value="1"/>
</dbReference>
<dbReference type="PANTHER" id="PTHR42680:SF3">
    <property type="entry name" value="DCTP DEAMINASE"/>
    <property type="match status" value="1"/>
</dbReference>
<dbReference type="Pfam" id="PF22769">
    <property type="entry name" value="DCD"/>
    <property type="match status" value="1"/>
</dbReference>
<dbReference type="SUPFAM" id="SSF51283">
    <property type="entry name" value="dUTPase-like"/>
    <property type="match status" value="1"/>
</dbReference>
<keyword id="KW-0002">3D-structure</keyword>
<keyword id="KW-0378">Hydrolase</keyword>
<keyword id="KW-0546">Nucleotide metabolism</keyword>
<keyword id="KW-0547">Nucleotide-binding</keyword>
<gene>
    <name evidence="1" type="primary">dcd</name>
    <name type="ordered locus">APH_0130</name>
</gene>
<protein>
    <recommendedName>
        <fullName evidence="1">dCTP deaminase</fullName>
        <ecNumber evidence="1">3.5.4.13</ecNumber>
    </recommendedName>
    <alternativeName>
        <fullName evidence="1">Deoxycytidine triphosphate deaminase</fullName>
    </alternativeName>
</protein>
<sequence>MSVMPDHWIKERALKDGMISPFVDHKEGTGVLSYGLSSYGYDARLDNKFKIFANTHSVVVDPKNFSQDSFVDREGDFCIIPPNSFMLAKTVEYFNIPRDVMVVCVGKSTYARCGIVVNVTPLEPGWSGYVTLEFSNTSPLPVKVYAFEGACQFLFFSGKERCSKSYDEAGGKYMGQSDVTLPIIS</sequence>
<organism>
    <name type="scientific">Anaplasma phagocytophilum (strain HZ)</name>
    <dbReference type="NCBI Taxonomy" id="212042"/>
    <lineage>
        <taxon>Bacteria</taxon>
        <taxon>Pseudomonadati</taxon>
        <taxon>Pseudomonadota</taxon>
        <taxon>Alphaproteobacteria</taxon>
        <taxon>Rickettsiales</taxon>
        <taxon>Anaplasmataceae</taxon>
        <taxon>Anaplasma</taxon>
        <taxon>phagocytophilum group</taxon>
    </lineage>
</organism>
<accession>Q2GLJ4</accession>
<feature type="chain" id="PRO_1000009677" description="dCTP deaminase">
    <location>
        <begin position="1"/>
        <end position="185"/>
    </location>
</feature>
<feature type="active site" description="Proton donor/acceptor" evidence="1">
    <location>
        <position position="133"/>
    </location>
</feature>
<feature type="binding site" evidence="1">
    <location>
        <begin position="107"/>
        <end position="112"/>
    </location>
    <ligand>
        <name>dCTP</name>
        <dbReference type="ChEBI" id="CHEBI:61481"/>
    </ligand>
</feature>
<feature type="binding site" evidence="1">
    <location>
        <begin position="131"/>
        <end position="133"/>
    </location>
    <ligand>
        <name>dCTP</name>
        <dbReference type="ChEBI" id="CHEBI:61481"/>
    </ligand>
</feature>
<feature type="binding site" evidence="1">
    <location>
        <position position="152"/>
    </location>
    <ligand>
        <name>dCTP</name>
        <dbReference type="ChEBI" id="CHEBI:61481"/>
    </ligand>
</feature>
<feature type="binding site" evidence="1">
    <location>
        <position position="166"/>
    </location>
    <ligand>
        <name>dCTP</name>
        <dbReference type="ChEBI" id="CHEBI:61481"/>
    </ligand>
</feature>
<feature type="binding site" evidence="1">
    <location>
        <position position="176"/>
    </location>
    <ligand>
        <name>dCTP</name>
        <dbReference type="ChEBI" id="CHEBI:61481"/>
    </ligand>
</feature>
<feature type="helix" evidence="2">
    <location>
        <begin position="6"/>
        <end position="16"/>
    </location>
</feature>
<feature type="strand" evidence="2">
    <location>
        <begin position="19"/>
        <end position="21"/>
    </location>
</feature>
<feature type="strand" evidence="2">
    <location>
        <begin position="27"/>
        <end position="32"/>
    </location>
</feature>
<feature type="strand" evidence="2">
    <location>
        <begin position="34"/>
        <end position="37"/>
    </location>
</feature>
<feature type="strand" evidence="2">
    <location>
        <begin position="40"/>
        <end position="52"/>
    </location>
</feature>
<feature type="helix" evidence="2">
    <location>
        <begin position="67"/>
        <end position="69"/>
    </location>
</feature>
<feature type="strand" evidence="2">
    <location>
        <begin position="70"/>
        <end position="80"/>
    </location>
</feature>
<feature type="strand" evidence="2">
    <location>
        <begin position="84"/>
        <end position="95"/>
    </location>
</feature>
<feature type="strand" evidence="2">
    <location>
        <begin position="100"/>
        <end position="105"/>
    </location>
</feature>
<feature type="helix" evidence="2">
    <location>
        <begin position="108"/>
        <end position="111"/>
    </location>
</feature>
<feature type="turn" evidence="2">
    <location>
        <begin position="112"/>
        <end position="114"/>
    </location>
</feature>
<feature type="strand" evidence="2">
    <location>
        <begin position="115"/>
        <end position="117"/>
    </location>
</feature>
<feature type="strand" evidence="2">
    <location>
        <begin position="127"/>
        <end position="136"/>
    </location>
</feature>
<feature type="strand" evidence="2">
    <location>
        <begin position="138"/>
        <end position="140"/>
    </location>
</feature>
<feature type="strand" evidence="2">
    <location>
        <begin position="142"/>
        <end position="145"/>
    </location>
</feature>
<feature type="strand" evidence="2">
    <location>
        <begin position="148"/>
        <end position="157"/>
    </location>
</feature>
<comment type="function">
    <text evidence="1">Catalyzes the deamination of dCTP to dUTP.</text>
</comment>
<comment type="catalytic activity">
    <reaction evidence="1">
        <text>dCTP + H2O + H(+) = dUTP + NH4(+)</text>
        <dbReference type="Rhea" id="RHEA:22680"/>
        <dbReference type="ChEBI" id="CHEBI:15377"/>
        <dbReference type="ChEBI" id="CHEBI:15378"/>
        <dbReference type="ChEBI" id="CHEBI:28938"/>
        <dbReference type="ChEBI" id="CHEBI:61481"/>
        <dbReference type="ChEBI" id="CHEBI:61555"/>
        <dbReference type="EC" id="3.5.4.13"/>
    </reaction>
</comment>
<comment type="pathway">
    <text evidence="1">Pyrimidine metabolism; dUMP biosynthesis; dUMP from dCTP (dUTP route): step 1/2.</text>
</comment>
<comment type="subunit">
    <text evidence="1">Homotrimer.</text>
</comment>
<comment type="similarity">
    <text evidence="1">Belongs to the dCTP deaminase family.</text>
</comment>
<reference key="1">
    <citation type="journal article" date="2006" name="PLoS Genet.">
        <title>Comparative genomics of emerging human ehrlichiosis agents.</title>
        <authorList>
            <person name="Dunning Hotopp J.C."/>
            <person name="Lin M."/>
            <person name="Madupu R."/>
            <person name="Crabtree J."/>
            <person name="Angiuoli S.V."/>
            <person name="Eisen J.A."/>
            <person name="Seshadri R."/>
            <person name="Ren Q."/>
            <person name="Wu M."/>
            <person name="Utterback T.R."/>
            <person name="Smith S."/>
            <person name="Lewis M."/>
            <person name="Khouri H."/>
            <person name="Zhang C."/>
            <person name="Niu H."/>
            <person name="Lin Q."/>
            <person name="Ohashi N."/>
            <person name="Zhi N."/>
            <person name="Nelson W.C."/>
            <person name="Brinkac L.M."/>
            <person name="Dodson R.J."/>
            <person name="Rosovitz M.J."/>
            <person name="Sundaram J.P."/>
            <person name="Daugherty S.C."/>
            <person name="Davidsen T."/>
            <person name="Durkin A.S."/>
            <person name="Gwinn M.L."/>
            <person name="Haft D.H."/>
            <person name="Selengut J.D."/>
            <person name="Sullivan S.A."/>
            <person name="Zafar N."/>
            <person name="Zhou L."/>
            <person name="Benahmed F."/>
            <person name="Forberger H."/>
            <person name="Halpin R."/>
            <person name="Mulligan S."/>
            <person name="Robinson J."/>
            <person name="White O."/>
            <person name="Rikihisa Y."/>
            <person name="Tettelin H."/>
        </authorList>
    </citation>
    <scope>NUCLEOTIDE SEQUENCE [LARGE SCALE GENOMIC DNA]</scope>
    <source>
        <strain>HZ</strain>
    </source>
</reference>
<evidence type="ECO:0000255" key="1">
    <source>
        <dbReference type="HAMAP-Rule" id="MF_00146"/>
    </source>
</evidence>
<evidence type="ECO:0007829" key="2">
    <source>
        <dbReference type="PDB" id="3KM3"/>
    </source>
</evidence>
<name>DCD_ANAPZ</name>
<proteinExistence type="evidence at protein level"/>